<gene>
    <name evidence="1" type="primary">leuA</name>
    <name type="ordered locus">PF0937</name>
</gene>
<name>LEU1_PYRFU</name>
<feature type="chain" id="PRO_0000140421" description="2-isopropylmalate synthase">
    <location>
        <begin position="1"/>
        <end position="499"/>
    </location>
</feature>
<feature type="domain" description="Pyruvate carboxyltransferase" evidence="1">
    <location>
        <begin position="5"/>
        <end position="267"/>
    </location>
</feature>
<feature type="region of interest" description="Regulatory domain" evidence="1">
    <location>
        <begin position="391"/>
        <end position="499"/>
    </location>
</feature>
<feature type="binding site" evidence="1">
    <location>
        <position position="14"/>
    </location>
    <ligand>
        <name>Mn(2+)</name>
        <dbReference type="ChEBI" id="CHEBI:29035"/>
    </ligand>
</feature>
<feature type="binding site" evidence="1">
    <location>
        <position position="202"/>
    </location>
    <ligand>
        <name>Mn(2+)</name>
        <dbReference type="ChEBI" id="CHEBI:29035"/>
    </ligand>
</feature>
<feature type="binding site" evidence="1">
    <location>
        <position position="204"/>
    </location>
    <ligand>
        <name>Mn(2+)</name>
        <dbReference type="ChEBI" id="CHEBI:29035"/>
    </ligand>
</feature>
<feature type="binding site" evidence="1">
    <location>
        <position position="238"/>
    </location>
    <ligand>
        <name>Mn(2+)</name>
        <dbReference type="ChEBI" id="CHEBI:29035"/>
    </ligand>
</feature>
<sequence>MARKIKIFDTTLRDGEQTPGVSLTVEEKIEIAKQLARLNVDVIEAGFPISSPGEFEAVKRIAREVRGPTIAALARAVKKDIDAAGEALKDAESKRIHTFIATSLIHMKYKLRKTPEEVKKMAVEAVEYATKYTDDIEFSAEDATRSDWNFLVEVYEAVIDAGATTINVPDTVGYTTPEEFYELIRYLKRNITNLNGVTISVHCHNDLGLAVANSLSAVRAGADQVEVTVNGIGERAGNAALEEVVVALDVRKDFYNVETGINLGEIARTSKLVARLTGIEVPPNKAVVGANAFAHESGIHQDGVLKERTTYEIIDPRKLGFSGSKIVLGKHSGRHAFRKKLEEMGYRLSEEEINRLFAKFKEIADRKKGLTELDIEAIVQEELGKGKGKYSVEVLHVISGKISTATVRVQGDGIDKIESAWSSNGPIDALFAAINRALGIDCKLKEYRVSSVTSGRDALGEVLVRVEYNGEIYVGRGLSTDIIEASAQAYLSALNRIRR</sequence>
<dbReference type="EC" id="2.3.3.13" evidence="1"/>
<dbReference type="EMBL" id="AE009950">
    <property type="protein sequence ID" value="AAL81061.1"/>
    <property type="molecule type" value="Genomic_DNA"/>
</dbReference>
<dbReference type="RefSeq" id="WP_011012073.1">
    <property type="nucleotide sequence ID" value="NZ_CP023154.1"/>
</dbReference>
<dbReference type="SMR" id="Q8U2A2"/>
<dbReference type="STRING" id="186497.PF0937"/>
<dbReference type="PaxDb" id="186497-PF0937"/>
<dbReference type="KEGG" id="pfu:PF0937"/>
<dbReference type="PATRIC" id="fig|186497.12.peg.993"/>
<dbReference type="eggNOG" id="arCOG02092">
    <property type="taxonomic scope" value="Archaea"/>
</dbReference>
<dbReference type="HOGENOM" id="CLU_022158_0_1_2"/>
<dbReference type="OrthoDB" id="6555at2157"/>
<dbReference type="PhylomeDB" id="Q8U2A2"/>
<dbReference type="UniPathway" id="UPA00048">
    <property type="reaction ID" value="UER00070"/>
</dbReference>
<dbReference type="Proteomes" id="UP000001013">
    <property type="component" value="Chromosome"/>
</dbReference>
<dbReference type="GO" id="GO:0005737">
    <property type="term" value="C:cytoplasm"/>
    <property type="evidence" value="ECO:0007669"/>
    <property type="project" value="UniProtKB-SubCell"/>
</dbReference>
<dbReference type="GO" id="GO:0003852">
    <property type="term" value="F:2-isopropylmalate synthase activity"/>
    <property type="evidence" value="ECO:0007669"/>
    <property type="project" value="UniProtKB-UniRule"/>
</dbReference>
<dbReference type="GO" id="GO:0003985">
    <property type="term" value="F:acetyl-CoA C-acetyltransferase activity"/>
    <property type="evidence" value="ECO:0007669"/>
    <property type="project" value="UniProtKB-UniRule"/>
</dbReference>
<dbReference type="GO" id="GO:0030145">
    <property type="term" value="F:manganese ion binding"/>
    <property type="evidence" value="ECO:0007669"/>
    <property type="project" value="UniProtKB-UniRule"/>
</dbReference>
<dbReference type="GO" id="GO:0009098">
    <property type="term" value="P:L-leucine biosynthetic process"/>
    <property type="evidence" value="ECO:0007669"/>
    <property type="project" value="UniProtKB-UniRule"/>
</dbReference>
<dbReference type="CDD" id="cd07940">
    <property type="entry name" value="DRE_TIM_IPMS"/>
    <property type="match status" value="1"/>
</dbReference>
<dbReference type="FunFam" id="1.10.238.260:FF:000001">
    <property type="entry name" value="2-isopropylmalate synthase"/>
    <property type="match status" value="1"/>
</dbReference>
<dbReference type="FunFam" id="3.20.20.70:FF:000010">
    <property type="entry name" value="2-isopropylmalate synthase"/>
    <property type="match status" value="1"/>
</dbReference>
<dbReference type="Gene3D" id="1.10.238.260">
    <property type="match status" value="1"/>
</dbReference>
<dbReference type="Gene3D" id="3.30.160.270">
    <property type="match status" value="1"/>
</dbReference>
<dbReference type="Gene3D" id="3.20.20.70">
    <property type="entry name" value="Aldolase class I"/>
    <property type="match status" value="1"/>
</dbReference>
<dbReference type="HAMAP" id="MF_01025">
    <property type="entry name" value="LeuA_type1"/>
    <property type="match status" value="1"/>
</dbReference>
<dbReference type="InterPro" id="IPR050073">
    <property type="entry name" value="2-IPM_HCS-like"/>
</dbReference>
<dbReference type="InterPro" id="IPR013709">
    <property type="entry name" value="2-isopropylmalate_synth_dimer"/>
</dbReference>
<dbReference type="InterPro" id="IPR002034">
    <property type="entry name" value="AIPM/Hcit_synth_CS"/>
</dbReference>
<dbReference type="InterPro" id="IPR013785">
    <property type="entry name" value="Aldolase_TIM"/>
</dbReference>
<dbReference type="InterPro" id="IPR054691">
    <property type="entry name" value="LeuA/HCS_post-cat"/>
</dbReference>
<dbReference type="InterPro" id="IPR036230">
    <property type="entry name" value="LeuA_allosteric_dom_sf"/>
</dbReference>
<dbReference type="InterPro" id="IPR005671">
    <property type="entry name" value="LeuA_bact_synth"/>
</dbReference>
<dbReference type="InterPro" id="IPR000891">
    <property type="entry name" value="PYR_CT"/>
</dbReference>
<dbReference type="NCBIfam" id="TIGR00973">
    <property type="entry name" value="leuA_bact"/>
    <property type="match status" value="1"/>
</dbReference>
<dbReference type="NCBIfam" id="NF002085">
    <property type="entry name" value="PRK00915.1-2"/>
    <property type="match status" value="1"/>
</dbReference>
<dbReference type="NCBIfam" id="NF002086">
    <property type="entry name" value="PRK00915.1-3"/>
    <property type="match status" value="1"/>
</dbReference>
<dbReference type="NCBIfam" id="NF002088">
    <property type="entry name" value="PRK00915.1-5"/>
    <property type="match status" value="1"/>
</dbReference>
<dbReference type="PANTHER" id="PTHR10277:SF9">
    <property type="entry name" value="2-ISOPROPYLMALATE SYNTHASE 1, CHLOROPLASTIC-RELATED"/>
    <property type="match status" value="1"/>
</dbReference>
<dbReference type="PANTHER" id="PTHR10277">
    <property type="entry name" value="HOMOCITRATE SYNTHASE-RELATED"/>
    <property type="match status" value="1"/>
</dbReference>
<dbReference type="Pfam" id="PF22617">
    <property type="entry name" value="HCS_D2"/>
    <property type="match status" value="1"/>
</dbReference>
<dbReference type="Pfam" id="PF00682">
    <property type="entry name" value="HMGL-like"/>
    <property type="match status" value="1"/>
</dbReference>
<dbReference type="Pfam" id="PF08502">
    <property type="entry name" value="LeuA_dimer"/>
    <property type="match status" value="1"/>
</dbReference>
<dbReference type="SMART" id="SM00917">
    <property type="entry name" value="LeuA_dimer"/>
    <property type="match status" value="1"/>
</dbReference>
<dbReference type="SUPFAM" id="SSF110921">
    <property type="entry name" value="2-isopropylmalate synthase LeuA, allosteric (dimerisation) domain"/>
    <property type="match status" value="1"/>
</dbReference>
<dbReference type="SUPFAM" id="SSF51569">
    <property type="entry name" value="Aldolase"/>
    <property type="match status" value="1"/>
</dbReference>
<dbReference type="PROSITE" id="PS00815">
    <property type="entry name" value="AIPM_HOMOCIT_SYNTH_1"/>
    <property type="match status" value="1"/>
</dbReference>
<dbReference type="PROSITE" id="PS00816">
    <property type="entry name" value="AIPM_HOMOCIT_SYNTH_2"/>
    <property type="match status" value="1"/>
</dbReference>
<dbReference type="PROSITE" id="PS50991">
    <property type="entry name" value="PYR_CT"/>
    <property type="match status" value="1"/>
</dbReference>
<protein>
    <recommendedName>
        <fullName evidence="1">2-isopropylmalate synthase</fullName>
        <ecNumber evidence="1">2.3.3.13</ecNumber>
    </recommendedName>
    <alternativeName>
        <fullName evidence="1">Alpha-IPM synthase</fullName>
    </alternativeName>
    <alternativeName>
        <fullName evidence="1">Alpha-isopropylmalate synthase</fullName>
    </alternativeName>
</protein>
<keyword id="KW-0028">Amino-acid biosynthesis</keyword>
<keyword id="KW-0100">Branched-chain amino acid biosynthesis</keyword>
<keyword id="KW-0963">Cytoplasm</keyword>
<keyword id="KW-0432">Leucine biosynthesis</keyword>
<keyword id="KW-0464">Manganese</keyword>
<keyword id="KW-0479">Metal-binding</keyword>
<keyword id="KW-1185">Reference proteome</keyword>
<keyword id="KW-0808">Transferase</keyword>
<reference key="1">
    <citation type="journal article" date="1999" name="Genetics">
        <title>Divergence of the hyperthermophilic archaea Pyrococcus furiosus and P. horikoshii inferred from complete genomic sequences.</title>
        <authorList>
            <person name="Maeder D.L."/>
            <person name="Weiss R.B."/>
            <person name="Dunn D.M."/>
            <person name="Cherry J.L."/>
            <person name="Gonzalez J.M."/>
            <person name="DiRuggiero J."/>
            <person name="Robb F.T."/>
        </authorList>
    </citation>
    <scope>NUCLEOTIDE SEQUENCE [LARGE SCALE GENOMIC DNA]</scope>
    <source>
        <strain>ATCC 43587 / DSM 3638 / JCM 8422 / Vc1</strain>
    </source>
</reference>
<proteinExistence type="inferred from homology"/>
<evidence type="ECO:0000255" key="1">
    <source>
        <dbReference type="HAMAP-Rule" id="MF_01025"/>
    </source>
</evidence>
<accession>Q8U2A2</accession>
<comment type="function">
    <text evidence="1">Catalyzes the condensation of the acetyl group of acetyl-CoA with 3-methyl-2-oxobutanoate (2-ketoisovalerate) to form 3-carboxy-3-hydroxy-4-methylpentanoate (2-isopropylmalate).</text>
</comment>
<comment type="catalytic activity">
    <reaction evidence="1">
        <text>3-methyl-2-oxobutanoate + acetyl-CoA + H2O = (2S)-2-isopropylmalate + CoA + H(+)</text>
        <dbReference type="Rhea" id="RHEA:21524"/>
        <dbReference type="ChEBI" id="CHEBI:1178"/>
        <dbReference type="ChEBI" id="CHEBI:11851"/>
        <dbReference type="ChEBI" id="CHEBI:15377"/>
        <dbReference type="ChEBI" id="CHEBI:15378"/>
        <dbReference type="ChEBI" id="CHEBI:57287"/>
        <dbReference type="ChEBI" id="CHEBI:57288"/>
        <dbReference type="EC" id="2.3.3.13"/>
    </reaction>
</comment>
<comment type="cofactor">
    <cofactor evidence="1">
        <name>Mn(2+)</name>
        <dbReference type="ChEBI" id="CHEBI:29035"/>
    </cofactor>
</comment>
<comment type="pathway">
    <text evidence="1">Amino-acid biosynthesis; L-leucine biosynthesis; L-leucine from 3-methyl-2-oxobutanoate: step 1/4.</text>
</comment>
<comment type="subcellular location">
    <subcellularLocation>
        <location evidence="1">Cytoplasm</location>
    </subcellularLocation>
</comment>
<comment type="similarity">
    <text evidence="1">Belongs to the alpha-IPM synthase/homocitrate synthase family. LeuA type 1 subfamily.</text>
</comment>
<organism>
    <name type="scientific">Pyrococcus furiosus (strain ATCC 43587 / DSM 3638 / JCM 8422 / Vc1)</name>
    <dbReference type="NCBI Taxonomy" id="186497"/>
    <lineage>
        <taxon>Archaea</taxon>
        <taxon>Methanobacteriati</taxon>
        <taxon>Methanobacteriota</taxon>
        <taxon>Thermococci</taxon>
        <taxon>Thermococcales</taxon>
        <taxon>Thermococcaceae</taxon>
        <taxon>Pyrococcus</taxon>
    </lineage>
</organism>